<dbReference type="EMBL" id="AB022219">
    <property type="protein sequence ID" value="BAB02037.1"/>
    <property type="molecule type" value="Genomic_DNA"/>
</dbReference>
<dbReference type="EMBL" id="CP002686">
    <property type="protein sequence ID" value="AEE75959.2"/>
    <property type="molecule type" value="Genomic_DNA"/>
</dbReference>
<dbReference type="RefSeq" id="NP_188375.2">
    <property type="nucleotide sequence ID" value="NM_112628.2"/>
</dbReference>
<dbReference type="SMR" id="Q9LUP9"/>
<dbReference type="FunCoup" id="Q9LUP9">
    <property type="interactions" value="11"/>
</dbReference>
<dbReference type="STRING" id="3702.Q9LUP9"/>
<dbReference type="PaxDb" id="3702-AT3G17480.1"/>
<dbReference type="EnsemblPlants" id="AT3G17480.1">
    <property type="protein sequence ID" value="AT3G17480.1"/>
    <property type="gene ID" value="AT3G17480"/>
</dbReference>
<dbReference type="GeneID" id="821013"/>
<dbReference type="Gramene" id="AT3G17480.1">
    <property type="protein sequence ID" value="AT3G17480.1"/>
    <property type="gene ID" value="AT3G17480"/>
</dbReference>
<dbReference type="KEGG" id="ath:AT3G17480"/>
<dbReference type="Araport" id="AT3G17480"/>
<dbReference type="TAIR" id="AT3G17480"/>
<dbReference type="HOGENOM" id="CLU_034692_0_0_1"/>
<dbReference type="InParanoid" id="Q9LUP9"/>
<dbReference type="OMA" id="SANTRYH"/>
<dbReference type="PhylomeDB" id="Q9LUP9"/>
<dbReference type="PRO" id="PR:Q9LUP9"/>
<dbReference type="Proteomes" id="UP000006548">
    <property type="component" value="Chromosome 3"/>
</dbReference>
<dbReference type="ExpressionAtlas" id="Q9LUP9">
    <property type="expression patterns" value="baseline"/>
</dbReference>
<dbReference type="CDD" id="cd22157">
    <property type="entry name" value="F-box_AtFBW1-like"/>
    <property type="match status" value="1"/>
</dbReference>
<dbReference type="Gene3D" id="1.20.1280.50">
    <property type="match status" value="1"/>
</dbReference>
<dbReference type="InterPro" id="IPR006527">
    <property type="entry name" value="F-box-assoc_dom_typ1"/>
</dbReference>
<dbReference type="InterPro" id="IPR017451">
    <property type="entry name" value="F-box-assoc_interact_dom"/>
</dbReference>
<dbReference type="InterPro" id="IPR036047">
    <property type="entry name" value="F-box-like_dom_sf"/>
</dbReference>
<dbReference type="InterPro" id="IPR001810">
    <property type="entry name" value="F-box_dom"/>
</dbReference>
<dbReference type="InterPro" id="IPR050796">
    <property type="entry name" value="SCF_F-box_component"/>
</dbReference>
<dbReference type="NCBIfam" id="TIGR01640">
    <property type="entry name" value="F_box_assoc_1"/>
    <property type="match status" value="1"/>
</dbReference>
<dbReference type="PANTHER" id="PTHR31672">
    <property type="entry name" value="BNACNNG10540D PROTEIN"/>
    <property type="match status" value="1"/>
</dbReference>
<dbReference type="PANTHER" id="PTHR31672:SF13">
    <property type="entry name" value="F-BOX PROTEIN CPR30-LIKE"/>
    <property type="match status" value="1"/>
</dbReference>
<dbReference type="Pfam" id="PF00646">
    <property type="entry name" value="F-box"/>
    <property type="match status" value="1"/>
</dbReference>
<dbReference type="Pfam" id="PF07734">
    <property type="entry name" value="FBA_1"/>
    <property type="match status" value="1"/>
</dbReference>
<dbReference type="SMART" id="SM00256">
    <property type="entry name" value="FBOX"/>
    <property type="match status" value="1"/>
</dbReference>
<dbReference type="SUPFAM" id="SSF81383">
    <property type="entry name" value="F-box domain"/>
    <property type="match status" value="1"/>
</dbReference>
<dbReference type="PROSITE" id="PS50181">
    <property type="entry name" value="FBOX"/>
    <property type="match status" value="1"/>
</dbReference>
<sequence>MMTLQSSPMSVLTEDLVEDILSRVPATSLVRLRSTCKQWNAILNDRRFIKKHFDTAEKEYLDMLLRSLRVSSMSVNLHGLHDNIDPSIELKRELNLKGLLCNSGKVESFEVFHCNGLLLFTNTSTIVVWNPCTGQTKWIQTESANTRYHKYALGYENKNLCRDYKILRFLDDGTNFELEIYEFNSSSWRVLDSVEIDFELDIGSQGMSVKGNTYWIVIDDHEVDGELVNCFLTSFDFTRERFGPHVCLPFQTSWYSDVISLSSVREERLSVLFHEEDSLTMEIWVTNDITDTIVTSWSKFLRVDLYTHRFYNGVTFFIDEENKAAVFSEDVPDDSDDIHSIVYIIGQDRLRIVDLEDGPFWPQMFCYVPSLVQI</sequence>
<reference key="1">
    <citation type="journal article" date="2000" name="DNA Res.">
        <title>Structural analysis of Arabidopsis thaliana chromosome 3. I. Sequence features of the regions of 4,504,864 bp covered by sixty P1 and TAC clones.</title>
        <authorList>
            <person name="Sato S."/>
            <person name="Nakamura Y."/>
            <person name="Kaneko T."/>
            <person name="Katoh T."/>
            <person name="Asamizu E."/>
            <person name="Tabata S."/>
        </authorList>
    </citation>
    <scope>NUCLEOTIDE SEQUENCE [LARGE SCALE GENOMIC DNA]</scope>
    <source>
        <strain>cv. Columbia</strain>
    </source>
</reference>
<reference key="2">
    <citation type="journal article" date="2017" name="Plant J.">
        <title>Araport11: a complete reannotation of the Arabidopsis thaliana reference genome.</title>
        <authorList>
            <person name="Cheng C.Y."/>
            <person name="Krishnakumar V."/>
            <person name="Chan A.P."/>
            <person name="Thibaud-Nissen F."/>
            <person name="Schobel S."/>
            <person name="Town C.D."/>
        </authorList>
    </citation>
    <scope>GENOME REANNOTATION</scope>
    <source>
        <strain>cv. Columbia</strain>
    </source>
</reference>
<keyword id="KW-1185">Reference proteome</keyword>
<gene>
    <name type="ordered locus">At3g17480</name>
    <name type="ORF">MKP6.3</name>
</gene>
<accession>Q9LUP9</accession>
<accession>F4J568</accession>
<name>FB152_ARATH</name>
<evidence type="ECO:0000255" key="1">
    <source>
        <dbReference type="PROSITE-ProRule" id="PRU00080"/>
    </source>
</evidence>
<organism>
    <name type="scientific">Arabidopsis thaliana</name>
    <name type="common">Mouse-ear cress</name>
    <dbReference type="NCBI Taxonomy" id="3702"/>
    <lineage>
        <taxon>Eukaryota</taxon>
        <taxon>Viridiplantae</taxon>
        <taxon>Streptophyta</taxon>
        <taxon>Embryophyta</taxon>
        <taxon>Tracheophyta</taxon>
        <taxon>Spermatophyta</taxon>
        <taxon>Magnoliopsida</taxon>
        <taxon>eudicotyledons</taxon>
        <taxon>Gunneridae</taxon>
        <taxon>Pentapetalae</taxon>
        <taxon>rosids</taxon>
        <taxon>malvids</taxon>
        <taxon>Brassicales</taxon>
        <taxon>Brassicaceae</taxon>
        <taxon>Camelineae</taxon>
        <taxon>Arabidopsis</taxon>
    </lineage>
</organism>
<proteinExistence type="predicted"/>
<protein>
    <recommendedName>
        <fullName>Putative F-box protein At3g17480</fullName>
    </recommendedName>
</protein>
<feature type="chain" id="PRO_0000283422" description="Putative F-box protein At3g17480">
    <location>
        <begin position="1"/>
        <end position="374"/>
    </location>
</feature>
<feature type="domain" description="F-box" evidence="1">
    <location>
        <begin position="6"/>
        <end position="52"/>
    </location>
</feature>